<reference key="1">
    <citation type="submission" date="2005-11" db="EMBL/GenBank/DDBJ databases">
        <authorList>
            <consortium name="NIH - Mammalian Gene Collection (MGC) project"/>
        </authorList>
    </citation>
    <scope>NUCLEOTIDE SEQUENCE [LARGE SCALE MRNA]</scope>
    <source>
        <strain>Crossbred X Angus</strain>
        <tissue>Liver</tissue>
    </source>
</reference>
<gene>
    <name type="primary">G3BP1</name>
    <name type="synonym">G3BP</name>
</gene>
<comment type="function">
    <text evidence="2">Protein involved in various processes, such as stress granule formation and innate immunity. Plays an essential role in stress granule formation. Stress granules are membraneless compartments that store mRNAs and proteins, such as stalled translation pre-initiation complexes, in response to stress. Promotes formation of stress granules phase-separated membraneless compartment by undergoing liquid-liquid phase separation (LLPS) upon unfolded RNA-binding: functions as a molecular switch that triggers RNA-dependent LLPS in response to a rise in intracellular free RNA concentrations. Also acts as an ATP- and magnesium-dependent helicase: unwinds DNA/DNA, RNA/DNA, and RNA/RNA substrates with comparable efficiency. Acts unidirectionally by moving in the 5' to 3' direction along the bound single-stranded DNA. Unwinds preferentially partial DNA and RNA duplexes having a 17 bp annealed portion and either a hanging 3' tail or hanging tails at both 5'- and 3'-ends. Plays an essential role in innate immunity by promoting CGAS and RIGI activity. Participates in the DNA-triggered cGAS/STING pathway by promoting the DNA binding and activation of CGAS. Triggers the condensation of cGAS, a process probably linked to the formation of membrane-less organelles. Also enhances RIGI-induced type I interferon production probably by helping RIGI at sensing pathogenic RNA. May also act as a phosphorylation-dependent sequence-specific endoribonuclease in vitro: Cleaves exclusively between cytosine and adenine and cleaves MYC mRNA preferentially at the 3'-UTR.</text>
</comment>
<comment type="catalytic activity">
    <reaction evidence="2">
        <text>ATP + H2O = ADP + phosphate + H(+)</text>
        <dbReference type="Rhea" id="RHEA:13065"/>
        <dbReference type="ChEBI" id="CHEBI:15377"/>
        <dbReference type="ChEBI" id="CHEBI:15378"/>
        <dbReference type="ChEBI" id="CHEBI:30616"/>
        <dbReference type="ChEBI" id="CHEBI:43474"/>
        <dbReference type="ChEBI" id="CHEBI:456216"/>
        <dbReference type="EC" id="3.6.4.12"/>
    </reaction>
</comment>
<comment type="catalytic activity">
    <reaction evidence="2">
        <text>ATP + H2O = ADP + phosphate + H(+)</text>
        <dbReference type="Rhea" id="RHEA:13065"/>
        <dbReference type="ChEBI" id="CHEBI:15377"/>
        <dbReference type="ChEBI" id="CHEBI:15378"/>
        <dbReference type="ChEBI" id="CHEBI:30616"/>
        <dbReference type="ChEBI" id="CHEBI:43474"/>
        <dbReference type="ChEBI" id="CHEBI:456216"/>
        <dbReference type="EC" id="3.6.4.13"/>
    </reaction>
</comment>
<comment type="cofactor">
    <cofactor evidence="2">
        <name>Mg(2+)</name>
        <dbReference type="ChEBI" id="CHEBI:18420"/>
    </cofactor>
    <text evidence="2">Mg(2+) is required for helicase activity.</text>
</comment>
<comment type="activity regulation">
    <text evidence="2">Under physiological conditions, G3BP1 adopts a compact state that is stabilized by intramolecular interactions between the RG-rich and the acidic regions that inhibit phase separation. Upon stress, polysomes disassemble and mRNAs are released in an unfolded protein-free state. Binding of unfolded mRNA to G3BP1 outcompetes the intramolecular interactions and RNA-bound G3BP1 adopts an expanded conformation in which the RG-rich region becomes exposed to engage in protein-protein and protein-RNA interactions, allowing physical cross-linking of RNA molecules to form protein-RNA condensates, leading to liquid-liquid phase separation (LLPS).</text>
</comment>
<comment type="subunit">
    <text evidence="1 2">Homodimer and oligomer. Component of a TAU mRNP complex, at least composed of IGF2BP1, ELAVL4 and G3BP1. Binds to the SH3 domain of Ras GTPase-activating protein (RASA1) in proliferating cells. No interaction in quiescent cells. Interacts (via NTF2 domain) with USP10; inhibiting stress granule formation by lowering G3BP1 valence. Interacts (via NTF2 domain) with CAPRIN1; promoting stress granule formation by lowering the saturation-concentration of G3BP1. Interacts (via NTF2 domain) with UBAP2L; promoting stress granule formation. Associates (via RG-rich region) with 40S ribosome subunits. Interacts with RPTOR and SPAG5; this complex is increased by oxidative stress. Interacts with ATXN2L. Interacts with STYXL1. Interacts with CGAS (via N-terminus); this interaction promotes the DNA-binding and activation of CGAS. Interacts (via C-terminus) with RIGI. Interacts with PABPC1. Interacts with QKI (isoforms QKI6 and QKI7); directing N(7)-methylguanine-containing mRNAs to stress granules.</text>
</comment>
<comment type="subcellular location">
    <subcellularLocation>
        <location evidence="1">Cytoplasm</location>
        <location evidence="1">Cytosol</location>
    </subcellularLocation>
    <subcellularLocation>
        <location evidence="1">Perikaryon</location>
    </subcellularLocation>
    <subcellularLocation>
        <location evidence="2">Cytoplasm</location>
        <location evidence="2">Stress granule</location>
    </subcellularLocation>
    <subcellularLocation>
        <location evidence="2">Nucleus</location>
    </subcellularLocation>
    <text evidence="2">Cytoplasmic in proliferating cells, can be recruited to the plasma membrane in exponentially growing cells. Cytosolic and partially nuclear in resting cells. Recruited to stress granules in response to arsenite treatment. The unphosphorylated form is recruited to stress granules. HRAS signaling contributes to this process by regulating G3BP dephosphorylation.</text>
</comment>
<comment type="domain">
    <text evidence="2">Can mediate both protein-protein and protein-RNA interactions via the NTF2 domain and RNA-binding domain RRM; protein-protein and protein-RNA interactions are essential for undergoing liquid-liquid phase separation (LLPS).</text>
</comment>
<comment type="domain">
    <text evidence="2">The acidic disordered region acts as a negative regulator of phase separation.</text>
</comment>
<comment type="domain">
    <text evidence="2">The NTF2 domain mediates interaction with CAPRIN1 and USP10 regulators, thereby regulating assembly of stress granules.</text>
</comment>
<comment type="PTM">
    <text evidence="2">Phosphorylation of the acidic disordered region regulates stress granule assembly. RASA1-dependent phosphorylation of Ser-149 induces a conformational change that prevents self-association. Dephosphorylation after HRAS activation is required for stress granule assembly. Ser-149 phosphorylation induces partial nuclear localization.</text>
</comment>
<comment type="PTM">
    <text evidence="2">Arg-435 is dimethylated, probably to asymmetric dimethylarginine.</text>
</comment>
<comment type="PTM">
    <text evidence="2">Ubiquitinated by TRIM21 via 'Lys-63'-linked polyubiquitination in the NTF2 domain in response to heat shock, leading to stress granule disassembly: ubiquitination promotes interaction with the FAF2 adapter, followed by interaction with VCP, which extracts G3BP1 from stress granules, leading to stress granule disassembly. In case of prolonged stress, ubiquitination by TRIM21 leads to autophagy-dependent degradation of G3BP1 via recruitment of ubiquitinated G3BP1 by SQSTM1 and/or CALCOCO2 to autophagosomes.</text>
</comment>
<proteinExistence type="evidence at transcript level"/>
<feature type="chain" id="PRO_0000271370" description="Ras GTPase-activating protein-binding protein 1">
    <location>
        <begin position="1"/>
        <end position="465"/>
    </location>
</feature>
<feature type="domain" description="NTF2" evidence="3">
    <location>
        <begin position="11"/>
        <end position="133"/>
    </location>
</feature>
<feature type="domain" description="RRM" evidence="4">
    <location>
        <begin position="339"/>
        <end position="414"/>
    </location>
</feature>
<feature type="region of interest" description="Acidic disordered region" evidence="2">
    <location>
        <begin position="142"/>
        <end position="224"/>
    </location>
</feature>
<feature type="region of interest" description="Disordered" evidence="5">
    <location>
        <begin position="145"/>
        <end position="242"/>
    </location>
</feature>
<feature type="region of interest" description="Disordered" evidence="5">
    <location>
        <begin position="254"/>
        <end position="326"/>
    </location>
</feature>
<feature type="region of interest" description="RG-rich region" evidence="2">
    <location>
        <begin position="409"/>
        <end position="465"/>
    </location>
</feature>
<feature type="region of interest" description="Disordered" evidence="5">
    <location>
        <begin position="412"/>
        <end position="465"/>
    </location>
</feature>
<feature type="compositionally biased region" description="Acidic residues" evidence="5">
    <location>
        <begin position="145"/>
        <end position="157"/>
    </location>
</feature>
<feature type="compositionally biased region" description="Acidic residues" evidence="5">
    <location>
        <begin position="184"/>
        <end position="205"/>
    </location>
</feature>
<feature type="compositionally biased region" description="Basic and acidic residues" evidence="5">
    <location>
        <begin position="296"/>
        <end position="306"/>
    </location>
</feature>
<feature type="compositionally biased region" description="Basic and acidic residues" evidence="5">
    <location>
        <begin position="317"/>
        <end position="326"/>
    </location>
</feature>
<feature type="compositionally biased region" description="Basic and acidic residues" evidence="5">
    <location>
        <begin position="412"/>
        <end position="427"/>
    </location>
</feature>
<feature type="compositionally biased region" description="Gly residues" evidence="5">
    <location>
        <begin position="429"/>
        <end position="446"/>
    </location>
</feature>
<feature type="modified residue" description="Phosphothreonine" evidence="2">
    <location>
        <position position="143"/>
    </location>
</feature>
<feature type="modified residue" description="Phosphoserine" evidence="2">
    <location>
        <position position="149"/>
    </location>
</feature>
<feature type="modified residue" description="Phosphoserine" evidence="2">
    <location>
        <position position="230"/>
    </location>
</feature>
<feature type="modified residue" description="Phosphoserine" evidence="2">
    <location>
        <position position="231"/>
    </location>
</feature>
<feature type="modified residue" description="Phosphoserine" evidence="2">
    <location>
        <position position="249"/>
    </location>
</feature>
<feature type="modified residue" description="Phosphoserine" evidence="2">
    <location>
        <position position="252"/>
    </location>
</feature>
<feature type="modified residue" description="Phosphoserine" evidence="2">
    <location>
        <position position="372"/>
    </location>
</feature>
<feature type="modified residue" description="N6-acetyllysine; alternate" evidence="2">
    <location>
        <position position="375"/>
    </location>
</feature>
<feature type="modified residue" description="Asymmetric dimethylarginine" evidence="2">
    <location>
        <position position="428"/>
    </location>
</feature>
<feature type="modified residue" description="Asymmetric dimethylarginine; alternate" evidence="2">
    <location>
        <position position="434"/>
    </location>
</feature>
<feature type="modified residue" description="Omega-N-methylarginine; alternate" evidence="2">
    <location>
        <position position="434"/>
    </location>
</feature>
<feature type="modified residue" description="Omega-N-methylarginine; alternate" evidence="1">
    <location>
        <position position="446"/>
    </location>
</feature>
<feature type="modified residue" description="Dimethylated arginine; alternate" evidence="2">
    <location>
        <position position="459"/>
    </location>
</feature>
<feature type="modified residue" description="Omega-N-methylarginine; alternate" evidence="2">
    <location>
        <position position="459"/>
    </location>
</feature>
<feature type="modified residue" description="Omega-N-methylarginine; alternate" evidence="2">
    <location>
        <position position="464"/>
    </location>
</feature>
<feature type="cross-link" description="Glycyl lysine isopeptide (Lys-Gly) (interchain with G-Cter in ubiquitin)" evidence="2">
    <location>
        <position position="36"/>
    </location>
</feature>
<feature type="cross-link" description="Glycyl lysine isopeptide (Lys-Gly) (interchain with G-Cter in ubiquitin)" evidence="2">
    <location>
        <position position="50"/>
    </location>
</feature>
<feature type="cross-link" description="Glycyl lysine isopeptide (Lys-Gly) (interchain with G-Cter in ubiquitin)" evidence="2">
    <location>
        <position position="59"/>
    </location>
</feature>
<feature type="cross-link" description="Glycyl lysine isopeptide (Lys-Gly) (interchain with G-Cter in ubiquitin)" evidence="2">
    <location>
        <position position="64"/>
    </location>
</feature>
<feature type="cross-link" description="Glycyl lysine isopeptide (Lys-Gly) (interchain with G-Cter in ubiquitin)" evidence="2">
    <location>
        <position position="76"/>
    </location>
</feature>
<feature type="cross-link" description="Glycyl lysine isopeptide (Lys-Gly) (interchain with G-Cter in ubiquitin)" evidence="2">
    <location>
        <position position="123"/>
    </location>
</feature>
<feature type="cross-link" description="Glycyl lysine isopeptide (Lys-Gly) (interchain with G-Cter in ubiquitin)" evidence="2">
    <location>
        <position position="352"/>
    </location>
</feature>
<feature type="cross-link" description="Glycyl lysine isopeptide (Lys-Gly) (interchain with G-Cter in ubiquitin)" evidence="2">
    <location>
        <position position="356"/>
    </location>
</feature>
<feature type="cross-link" description="Glycyl lysine isopeptide (Lys-Gly) (interchain with G-Cter in SUMO2); alternate" evidence="2">
    <location>
        <position position="375"/>
    </location>
</feature>
<feature type="cross-link" description="Glycyl lysine isopeptide (Lys-Gly) (interchain with G-Cter in ubiquitin)" evidence="2">
    <location>
        <position position="375"/>
    </location>
</feature>
<feature type="cross-link" description="Glycyl lysine isopeptide (Lys-Gly) (interchain with G-Cter in ubiquitin); alternate" evidence="2">
    <location>
        <position position="392"/>
    </location>
</feature>
<dbReference type="EC" id="3.6.4.12" evidence="2"/>
<dbReference type="EC" id="3.6.4.13" evidence="2"/>
<dbReference type="EMBL" id="BC109645">
    <property type="protein sequence ID" value="AAI09646.1"/>
    <property type="molecule type" value="mRNA"/>
</dbReference>
<dbReference type="RefSeq" id="NP_001032700.1">
    <property type="nucleotide sequence ID" value="NM_001037611.2"/>
</dbReference>
<dbReference type="RefSeq" id="XP_059744259.1">
    <property type="nucleotide sequence ID" value="XM_059888276.1"/>
</dbReference>
<dbReference type="RefSeq" id="XP_059744260.1">
    <property type="nucleotide sequence ID" value="XM_059888277.1"/>
</dbReference>
<dbReference type="SMR" id="Q32LC7"/>
<dbReference type="FunCoup" id="Q32LC7">
    <property type="interactions" value="4753"/>
</dbReference>
<dbReference type="STRING" id="9913.ENSBTAP00000027067"/>
<dbReference type="PaxDb" id="9913-ENSBTAP00000027067"/>
<dbReference type="PeptideAtlas" id="Q32LC7"/>
<dbReference type="Ensembl" id="ENSBTAT00000027067.7">
    <property type="protein sequence ID" value="ENSBTAP00000027067.5"/>
    <property type="gene ID" value="ENSBTAG00000020309.7"/>
</dbReference>
<dbReference type="GeneID" id="534214"/>
<dbReference type="KEGG" id="bta:534214"/>
<dbReference type="CTD" id="10146"/>
<dbReference type="VEuPathDB" id="HostDB:ENSBTAG00000020309"/>
<dbReference type="VGNC" id="VGNC:29176">
    <property type="gene designation" value="G3BP1"/>
</dbReference>
<dbReference type="eggNOG" id="KOG0116">
    <property type="taxonomic scope" value="Eukaryota"/>
</dbReference>
<dbReference type="GeneTree" id="ENSGT00390000011365"/>
<dbReference type="HOGENOM" id="CLU_022209_0_2_1"/>
<dbReference type="InParanoid" id="Q32LC7"/>
<dbReference type="OMA" id="RCKGPQG"/>
<dbReference type="OrthoDB" id="339151at2759"/>
<dbReference type="TreeFam" id="TF325464"/>
<dbReference type="Proteomes" id="UP000009136">
    <property type="component" value="Chromosome 7"/>
</dbReference>
<dbReference type="Bgee" id="ENSBTAG00000020309">
    <property type="expression patterns" value="Expressed in pharyngeal tonsil and 110 other cell types or tissues"/>
</dbReference>
<dbReference type="GO" id="GO:0010494">
    <property type="term" value="C:cytoplasmic stress granule"/>
    <property type="evidence" value="ECO:0000250"/>
    <property type="project" value="UniProtKB"/>
</dbReference>
<dbReference type="GO" id="GO:0005829">
    <property type="term" value="C:cytosol"/>
    <property type="evidence" value="ECO:0000318"/>
    <property type="project" value="GO_Central"/>
</dbReference>
<dbReference type="GO" id="GO:0005634">
    <property type="term" value="C:nucleus"/>
    <property type="evidence" value="ECO:0007669"/>
    <property type="project" value="UniProtKB-SubCell"/>
</dbReference>
<dbReference type="GO" id="GO:0043204">
    <property type="term" value="C:perikaryon"/>
    <property type="evidence" value="ECO:0007669"/>
    <property type="project" value="UniProtKB-SubCell"/>
</dbReference>
<dbReference type="GO" id="GO:0005524">
    <property type="term" value="F:ATP binding"/>
    <property type="evidence" value="ECO:0007669"/>
    <property type="project" value="UniProtKB-KW"/>
</dbReference>
<dbReference type="GO" id="GO:0016887">
    <property type="term" value="F:ATP hydrolysis activity"/>
    <property type="evidence" value="ECO:0007669"/>
    <property type="project" value="RHEA"/>
</dbReference>
<dbReference type="GO" id="GO:0003677">
    <property type="term" value="F:DNA binding"/>
    <property type="evidence" value="ECO:0007669"/>
    <property type="project" value="UniProtKB-KW"/>
</dbReference>
<dbReference type="GO" id="GO:0003678">
    <property type="term" value="F:DNA helicase activity"/>
    <property type="evidence" value="ECO:0000318"/>
    <property type="project" value="GO_Central"/>
</dbReference>
<dbReference type="GO" id="GO:0033677">
    <property type="term" value="F:DNA/RNA helicase activity"/>
    <property type="evidence" value="ECO:0000318"/>
    <property type="project" value="GO_Central"/>
</dbReference>
<dbReference type="GO" id="GO:0004519">
    <property type="term" value="F:endonuclease activity"/>
    <property type="evidence" value="ECO:0007669"/>
    <property type="project" value="UniProtKB-KW"/>
</dbReference>
<dbReference type="GO" id="GO:0140693">
    <property type="term" value="F:molecular condensate scaffold activity"/>
    <property type="evidence" value="ECO:0000250"/>
    <property type="project" value="UniProtKB"/>
</dbReference>
<dbReference type="GO" id="GO:0003729">
    <property type="term" value="F:mRNA binding"/>
    <property type="evidence" value="ECO:0000318"/>
    <property type="project" value="GO_Central"/>
</dbReference>
<dbReference type="GO" id="GO:0043024">
    <property type="term" value="F:ribosomal small subunit binding"/>
    <property type="evidence" value="ECO:0000250"/>
    <property type="project" value="UniProtKB"/>
</dbReference>
<dbReference type="GO" id="GO:0003724">
    <property type="term" value="F:RNA helicase activity"/>
    <property type="evidence" value="ECO:0000318"/>
    <property type="project" value="GO_Central"/>
</dbReference>
<dbReference type="GO" id="GO:0045087">
    <property type="term" value="P:innate immune response"/>
    <property type="evidence" value="ECO:0007669"/>
    <property type="project" value="UniProtKB-KW"/>
</dbReference>
<dbReference type="GO" id="GO:0034063">
    <property type="term" value="P:stress granule assembly"/>
    <property type="evidence" value="ECO:0000250"/>
    <property type="project" value="UniProtKB"/>
</dbReference>
<dbReference type="CDD" id="cd00780">
    <property type="entry name" value="NTF2"/>
    <property type="match status" value="1"/>
</dbReference>
<dbReference type="CDD" id="cd12463">
    <property type="entry name" value="RRM_G3BP1"/>
    <property type="match status" value="1"/>
</dbReference>
<dbReference type="FunFam" id="3.30.70.330:FF:000266">
    <property type="entry name" value="Ras GTPase-activating protein-binding protein 1"/>
    <property type="match status" value="1"/>
</dbReference>
<dbReference type="FunFam" id="3.10.450.50:FF:000002">
    <property type="entry name" value="Ras GTPase-activating protein-binding protein 2 isoform 1"/>
    <property type="match status" value="1"/>
</dbReference>
<dbReference type="Gene3D" id="3.10.450.50">
    <property type="match status" value="1"/>
</dbReference>
<dbReference type="Gene3D" id="3.30.70.330">
    <property type="match status" value="1"/>
</dbReference>
<dbReference type="InterPro" id="IPR034374">
    <property type="entry name" value="G3BP1_RRM"/>
</dbReference>
<dbReference type="InterPro" id="IPR032710">
    <property type="entry name" value="NTF2-like_dom_sf"/>
</dbReference>
<dbReference type="InterPro" id="IPR002075">
    <property type="entry name" value="NTF2_dom"/>
</dbReference>
<dbReference type="InterPro" id="IPR018222">
    <property type="entry name" value="Nuclear_transport_factor_2_euk"/>
</dbReference>
<dbReference type="InterPro" id="IPR012677">
    <property type="entry name" value="Nucleotide-bd_a/b_plait_sf"/>
</dbReference>
<dbReference type="InterPro" id="IPR039539">
    <property type="entry name" value="Ras_GTPase_bind_prot"/>
</dbReference>
<dbReference type="InterPro" id="IPR035979">
    <property type="entry name" value="RBD_domain_sf"/>
</dbReference>
<dbReference type="InterPro" id="IPR000504">
    <property type="entry name" value="RRM_dom"/>
</dbReference>
<dbReference type="PANTHER" id="PTHR10693">
    <property type="entry name" value="RAS GTPASE-ACTIVATING PROTEIN-BINDING PROTEIN"/>
    <property type="match status" value="1"/>
</dbReference>
<dbReference type="PANTHER" id="PTHR10693:SF21">
    <property type="entry name" value="RAS GTPASE-ACTIVATING PROTEIN-BINDING PROTEIN 1"/>
    <property type="match status" value="1"/>
</dbReference>
<dbReference type="Pfam" id="PF02136">
    <property type="entry name" value="NTF2"/>
    <property type="match status" value="1"/>
</dbReference>
<dbReference type="Pfam" id="PF00076">
    <property type="entry name" value="RRM_1"/>
    <property type="match status" value="1"/>
</dbReference>
<dbReference type="SMART" id="SM00360">
    <property type="entry name" value="RRM"/>
    <property type="match status" value="1"/>
</dbReference>
<dbReference type="SUPFAM" id="SSF54427">
    <property type="entry name" value="NTF2-like"/>
    <property type="match status" value="1"/>
</dbReference>
<dbReference type="SUPFAM" id="SSF54928">
    <property type="entry name" value="RNA-binding domain, RBD"/>
    <property type="match status" value="1"/>
</dbReference>
<dbReference type="PROSITE" id="PS50177">
    <property type="entry name" value="NTF2_DOMAIN"/>
    <property type="match status" value="1"/>
</dbReference>
<dbReference type="PROSITE" id="PS50102">
    <property type="entry name" value="RRM"/>
    <property type="match status" value="1"/>
</dbReference>
<keyword id="KW-0007">Acetylation</keyword>
<keyword id="KW-0067">ATP-binding</keyword>
<keyword id="KW-0963">Cytoplasm</keyword>
<keyword id="KW-0238">DNA-binding</keyword>
<keyword id="KW-0255">Endonuclease</keyword>
<keyword id="KW-0347">Helicase</keyword>
<keyword id="KW-0378">Hydrolase</keyword>
<keyword id="KW-0391">Immunity</keyword>
<keyword id="KW-0399">Innate immunity</keyword>
<keyword id="KW-1017">Isopeptide bond</keyword>
<keyword id="KW-0488">Methylation</keyword>
<keyword id="KW-0540">Nuclease</keyword>
<keyword id="KW-0547">Nucleotide-binding</keyword>
<keyword id="KW-0539">Nucleus</keyword>
<keyword id="KW-0597">Phosphoprotein</keyword>
<keyword id="KW-1185">Reference proteome</keyword>
<keyword id="KW-0694">RNA-binding</keyword>
<keyword id="KW-0813">Transport</keyword>
<keyword id="KW-0832">Ubl conjugation</keyword>
<protein>
    <recommendedName>
        <fullName>Ras GTPase-activating protein-binding protein 1</fullName>
        <shortName>G3BP-1</shortName>
        <ecNumber evidence="2">3.6.4.12</ecNumber>
        <ecNumber evidence="2">3.6.4.13</ecNumber>
    </recommendedName>
    <alternativeName>
        <fullName>ATP-dependent DNA/RNA helicase G3BP</fullName>
    </alternativeName>
</protein>
<sequence length="465" mass="52122">MVMEKPSPLLVGREFVRQYYTLLNQAPDMLHRFYGKNSSYVHGGLDSNGKPADAVYGQKEIHRKVMSQNFTNCHTKIRHVDAHATLNDGVVVQVMGLLSNNNQALRRFMQTFVLAPEGSVANKFYVHNDIFRYQDEVFGGFITEPQEESEEEVEEPEERQQTPEVVPDDSGTFYDQTVSNDLEEHLEEPVAEPEPEPEPEPEQEPVSEVQEEKSEPVLEETAPEDVQKSSSPAPADIAQTVQEDLRTFSWASVTSKNLPPSGAVPVTGIPPHVVKVPASQPRPESKPESQIPLQRPQRDQRVREQRINVPPQRGPRPVREAGEQGDVEPRRIVRHPDSHQLFIGNLPHEVDKSELKDFFQNYGNVVELRINSGGKLPNFGFVVFDDSEPVQKVLSNRPIMFRGEVRLNVEEKKTRAAREGDRRDNRLRGPGGPRGGLGGGMRGPPRGGMVQKPGFGVGRSIAPRQ</sequence>
<accession>Q32LC7</accession>
<evidence type="ECO:0000250" key="1">
    <source>
        <dbReference type="UniProtKB" id="P97855"/>
    </source>
</evidence>
<evidence type="ECO:0000250" key="2">
    <source>
        <dbReference type="UniProtKB" id="Q13283"/>
    </source>
</evidence>
<evidence type="ECO:0000255" key="3">
    <source>
        <dbReference type="PROSITE-ProRule" id="PRU00137"/>
    </source>
</evidence>
<evidence type="ECO:0000255" key="4">
    <source>
        <dbReference type="PROSITE-ProRule" id="PRU00176"/>
    </source>
</evidence>
<evidence type="ECO:0000256" key="5">
    <source>
        <dbReference type="SAM" id="MobiDB-lite"/>
    </source>
</evidence>
<name>G3BP1_BOVIN</name>
<organism>
    <name type="scientific">Bos taurus</name>
    <name type="common">Bovine</name>
    <dbReference type="NCBI Taxonomy" id="9913"/>
    <lineage>
        <taxon>Eukaryota</taxon>
        <taxon>Metazoa</taxon>
        <taxon>Chordata</taxon>
        <taxon>Craniata</taxon>
        <taxon>Vertebrata</taxon>
        <taxon>Euteleostomi</taxon>
        <taxon>Mammalia</taxon>
        <taxon>Eutheria</taxon>
        <taxon>Laurasiatheria</taxon>
        <taxon>Artiodactyla</taxon>
        <taxon>Ruminantia</taxon>
        <taxon>Pecora</taxon>
        <taxon>Bovidae</taxon>
        <taxon>Bovinae</taxon>
        <taxon>Bos</taxon>
    </lineage>
</organism>